<accession>B0S3Z1</accession>
<dbReference type="EMBL" id="AP008971">
    <property type="protein sequence ID" value="BAG07782.1"/>
    <property type="molecule type" value="Genomic_DNA"/>
</dbReference>
<dbReference type="RefSeq" id="WP_002838776.1">
    <property type="nucleotide sequence ID" value="NC_010376.1"/>
</dbReference>
<dbReference type="SMR" id="B0S3Z1"/>
<dbReference type="STRING" id="334413.FMG_0364"/>
<dbReference type="KEGG" id="fma:FMG_0364"/>
<dbReference type="eggNOG" id="COG0261">
    <property type="taxonomic scope" value="Bacteria"/>
</dbReference>
<dbReference type="HOGENOM" id="CLU_061463_3_2_9"/>
<dbReference type="Proteomes" id="UP000001319">
    <property type="component" value="Chromosome"/>
</dbReference>
<dbReference type="GO" id="GO:0005737">
    <property type="term" value="C:cytoplasm"/>
    <property type="evidence" value="ECO:0007669"/>
    <property type="project" value="UniProtKB-ARBA"/>
</dbReference>
<dbReference type="GO" id="GO:1990904">
    <property type="term" value="C:ribonucleoprotein complex"/>
    <property type="evidence" value="ECO:0007669"/>
    <property type="project" value="UniProtKB-KW"/>
</dbReference>
<dbReference type="GO" id="GO:0005840">
    <property type="term" value="C:ribosome"/>
    <property type="evidence" value="ECO:0007669"/>
    <property type="project" value="UniProtKB-KW"/>
</dbReference>
<dbReference type="GO" id="GO:0019843">
    <property type="term" value="F:rRNA binding"/>
    <property type="evidence" value="ECO:0007669"/>
    <property type="project" value="UniProtKB-UniRule"/>
</dbReference>
<dbReference type="GO" id="GO:0003735">
    <property type="term" value="F:structural constituent of ribosome"/>
    <property type="evidence" value="ECO:0007669"/>
    <property type="project" value="InterPro"/>
</dbReference>
<dbReference type="GO" id="GO:0006412">
    <property type="term" value="P:translation"/>
    <property type="evidence" value="ECO:0007669"/>
    <property type="project" value="UniProtKB-UniRule"/>
</dbReference>
<dbReference type="HAMAP" id="MF_01363">
    <property type="entry name" value="Ribosomal_bL21"/>
    <property type="match status" value="1"/>
</dbReference>
<dbReference type="InterPro" id="IPR028909">
    <property type="entry name" value="bL21-like"/>
</dbReference>
<dbReference type="InterPro" id="IPR036164">
    <property type="entry name" value="bL21-like_sf"/>
</dbReference>
<dbReference type="InterPro" id="IPR001787">
    <property type="entry name" value="Ribosomal_bL21"/>
</dbReference>
<dbReference type="InterPro" id="IPR018258">
    <property type="entry name" value="Ribosomal_bL21_CS"/>
</dbReference>
<dbReference type="NCBIfam" id="TIGR00061">
    <property type="entry name" value="L21"/>
    <property type="match status" value="1"/>
</dbReference>
<dbReference type="PANTHER" id="PTHR21349">
    <property type="entry name" value="50S RIBOSOMAL PROTEIN L21"/>
    <property type="match status" value="1"/>
</dbReference>
<dbReference type="PANTHER" id="PTHR21349:SF0">
    <property type="entry name" value="LARGE RIBOSOMAL SUBUNIT PROTEIN BL21M"/>
    <property type="match status" value="1"/>
</dbReference>
<dbReference type="Pfam" id="PF00829">
    <property type="entry name" value="Ribosomal_L21p"/>
    <property type="match status" value="1"/>
</dbReference>
<dbReference type="SUPFAM" id="SSF141091">
    <property type="entry name" value="L21p-like"/>
    <property type="match status" value="1"/>
</dbReference>
<dbReference type="PROSITE" id="PS01169">
    <property type="entry name" value="RIBOSOMAL_L21"/>
    <property type="match status" value="1"/>
</dbReference>
<evidence type="ECO:0000255" key="1">
    <source>
        <dbReference type="HAMAP-Rule" id="MF_01363"/>
    </source>
</evidence>
<evidence type="ECO:0000305" key="2"/>
<protein>
    <recommendedName>
        <fullName evidence="1">Large ribosomal subunit protein bL21</fullName>
    </recommendedName>
    <alternativeName>
        <fullName evidence="2">50S ribosomal protein L21</fullName>
    </alternativeName>
</protein>
<gene>
    <name evidence="1" type="primary">rplU</name>
    <name type="ordered locus">FMG_0364</name>
</gene>
<comment type="function">
    <text evidence="1">This protein binds to 23S rRNA in the presence of protein L20.</text>
</comment>
<comment type="subunit">
    <text evidence="1">Part of the 50S ribosomal subunit. Contacts protein L20.</text>
</comment>
<comment type="similarity">
    <text evidence="1">Belongs to the bacterial ribosomal protein bL21 family.</text>
</comment>
<sequence>MFAIIKTGGKQYKVSEGDIIKVEKIEAEAGDKIEFDQVLMVAGDDVKVGSPVVEGAKVSAEVLDQKKDKKIVIFKFKAKKNYRKKKGHRQPYTLVKIEKIDA</sequence>
<keyword id="KW-1185">Reference proteome</keyword>
<keyword id="KW-0687">Ribonucleoprotein</keyword>
<keyword id="KW-0689">Ribosomal protein</keyword>
<keyword id="KW-0694">RNA-binding</keyword>
<keyword id="KW-0699">rRNA-binding</keyword>
<feature type="chain" id="PRO_1000143800" description="Large ribosomal subunit protein bL21">
    <location>
        <begin position="1"/>
        <end position="102"/>
    </location>
</feature>
<organism>
    <name type="scientific">Finegoldia magna (strain ATCC 29328 / DSM 20472 / WAL 2508)</name>
    <name type="common">Peptostreptococcus magnus</name>
    <dbReference type="NCBI Taxonomy" id="334413"/>
    <lineage>
        <taxon>Bacteria</taxon>
        <taxon>Bacillati</taxon>
        <taxon>Bacillota</taxon>
        <taxon>Tissierellia</taxon>
        <taxon>Tissierellales</taxon>
        <taxon>Peptoniphilaceae</taxon>
        <taxon>Finegoldia</taxon>
    </lineage>
</organism>
<proteinExistence type="inferred from homology"/>
<name>RL21_FINM2</name>
<reference key="1">
    <citation type="journal article" date="2008" name="DNA Res.">
        <title>Complete genome sequence of Finegoldia magna, an anaerobic opportunistic pathogen.</title>
        <authorList>
            <person name="Goto T."/>
            <person name="Yamashita A."/>
            <person name="Hirakawa H."/>
            <person name="Matsutani M."/>
            <person name="Todo K."/>
            <person name="Ohshima K."/>
            <person name="Toh H."/>
            <person name="Miyamoto K."/>
            <person name="Kuhara S."/>
            <person name="Hattori M."/>
            <person name="Shimizu T."/>
            <person name="Akimoto S."/>
        </authorList>
    </citation>
    <scope>NUCLEOTIDE SEQUENCE [LARGE SCALE GENOMIC DNA]</scope>
    <source>
        <strain>ATCC 29328 / DSM 20472 / WAL 2508</strain>
    </source>
</reference>